<evidence type="ECO:0000255" key="1">
    <source>
        <dbReference type="HAMAP-Rule" id="MF_00374"/>
    </source>
</evidence>
<evidence type="ECO:0000305" key="2"/>
<sequence length="66" mass="7768">MKTNDIRELTTAEIETKVKALKEELFNLRFQLATGQLENPTRIREVRKAIARMKTVVREREIGINR</sequence>
<feature type="chain" id="PRO_1000193996" description="Large ribosomal subunit protein uL29">
    <location>
        <begin position="1"/>
        <end position="66"/>
    </location>
</feature>
<gene>
    <name evidence="1" type="primary">rpmC</name>
    <name type="ordered locus">BCA_0147</name>
</gene>
<reference key="1">
    <citation type="submission" date="2009-02" db="EMBL/GenBank/DDBJ databases">
        <title>Genome sequence of Bacillus cereus 03BB102.</title>
        <authorList>
            <person name="Dodson R.J."/>
            <person name="Jackson P."/>
            <person name="Munk A.C."/>
            <person name="Brettin T."/>
            <person name="Bruce D."/>
            <person name="Detter C."/>
            <person name="Tapia R."/>
            <person name="Han C."/>
            <person name="Sutton G."/>
            <person name="Sims D."/>
        </authorList>
    </citation>
    <scope>NUCLEOTIDE SEQUENCE [LARGE SCALE GENOMIC DNA]</scope>
    <source>
        <strain>03BB102</strain>
    </source>
</reference>
<protein>
    <recommendedName>
        <fullName evidence="1">Large ribosomal subunit protein uL29</fullName>
    </recommendedName>
    <alternativeName>
        <fullName evidence="2">50S ribosomal protein L29</fullName>
    </alternativeName>
</protein>
<name>RL29_BACC3</name>
<proteinExistence type="inferred from homology"/>
<dbReference type="EMBL" id="CP001407">
    <property type="protein sequence ID" value="ACO27374.1"/>
    <property type="molecule type" value="Genomic_DNA"/>
</dbReference>
<dbReference type="RefSeq" id="WP_000855718.1">
    <property type="nucleotide sequence ID" value="NZ_CP009318.1"/>
</dbReference>
<dbReference type="SMR" id="C1ET47"/>
<dbReference type="GeneID" id="93010935"/>
<dbReference type="KEGG" id="bcx:BCA_0147"/>
<dbReference type="PATRIC" id="fig|572264.18.peg.182"/>
<dbReference type="Proteomes" id="UP000002210">
    <property type="component" value="Chromosome"/>
</dbReference>
<dbReference type="GO" id="GO:0022625">
    <property type="term" value="C:cytosolic large ribosomal subunit"/>
    <property type="evidence" value="ECO:0007669"/>
    <property type="project" value="TreeGrafter"/>
</dbReference>
<dbReference type="GO" id="GO:0003735">
    <property type="term" value="F:structural constituent of ribosome"/>
    <property type="evidence" value="ECO:0007669"/>
    <property type="project" value="InterPro"/>
</dbReference>
<dbReference type="GO" id="GO:0006412">
    <property type="term" value="P:translation"/>
    <property type="evidence" value="ECO:0007669"/>
    <property type="project" value="UniProtKB-UniRule"/>
</dbReference>
<dbReference type="CDD" id="cd00427">
    <property type="entry name" value="Ribosomal_L29_HIP"/>
    <property type="match status" value="1"/>
</dbReference>
<dbReference type="FunFam" id="1.10.287.310:FF:000001">
    <property type="entry name" value="50S ribosomal protein L29"/>
    <property type="match status" value="1"/>
</dbReference>
<dbReference type="Gene3D" id="1.10.287.310">
    <property type="match status" value="1"/>
</dbReference>
<dbReference type="HAMAP" id="MF_00374">
    <property type="entry name" value="Ribosomal_uL29"/>
    <property type="match status" value="1"/>
</dbReference>
<dbReference type="InterPro" id="IPR050063">
    <property type="entry name" value="Ribosomal_protein_uL29"/>
</dbReference>
<dbReference type="InterPro" id="IPR001854">
    <property type="entry name" value="Ribosomal_uL29"/>
</dbReference>
<dbReference type="InterPro" id="IPR018254">
    <property type="entry name" value="Ribosomal_uL29_CS"/>
</dbReference>
<dbReference type="InterPro" id="IPR036049">
    <property type="entry name" value="Ribosomal_uL29_sf"/>
</dbReference>
<dbReference type="NCBIfam" id="TIGR00012">
    <property type="entry name" value="L29"/>
    <property type="match status" value="1"/>
</dbReference>
<dbReference type="PANTHER" id="PTHR10916">
    <property type="entry name" value="60S RIBOSOMAL PROTEIN L35/50S RIBOSOMAL PROTEIN L29"/>
    <property type="match status" value="1"/>
</dbReference>
<dbReference type="PANTHER" id="PTHR10916:SF0">
    <property type="entry name" value="LARGE RIBOSOMAL SUBUNIT PROTEIN UL29C"/>
    <property type="match status" value="1"/>
</dbReference>
<dbReference type="Pfam" id="PF00831">
    <property type="entry name" value="Ribosomal_L29"/>
    <property type="match status" value="1"/>
</dbReference>
<dbReference type="SUPFAM" id="SSF46561">
    <property type="entry name" value="Ribosomal protein L29 (L29p)"/>
    <property type="match status" value="1"/>
</dbReference>
<dbReference type="PROSITE" id="PS00579">
    <property type="entry name" value="RIBOSOMAL_L29"/>
    <property type="match status" value="1"/>
</dbReference>
<organism>
    <name type="scientific">Bacillus cereus (strain 03BB102)</name>
    <dbReference type="NCBI Taxonomy" id="572264"/>
    <lineage>
        <taxon>Bacteria</taxon>
        <taxon>Bacillati</taxon>
        <taxon>Bacillota</taxon>
        <taxon>Bacilli</taxon>
        <taxon>Bacillales</taxon>
        <taxon>Bacillaceae</taxon>
        <taxon>Bacillus</taxon>
        <taxon>Bacillus cereus group</taxon>
    </lineage>
</organism>
<accession>C1ET47</accession>
<comment type="similarity">
    <text evidence="1">Belongs to the universal ribosomal protein uL29 family.</text>
</comment>
<keyword id="KW-0687">Ribonucleoprotein</keyword>
<keyword id="KW-0689">Ribosomal protein</keyword>